<comment type="function">
    <text evidence="2">Involved in the regulation of axillary shoot growth angle (PubMed:23663106). Promotes horizontal shoot growth (PubMed:23663106).</text>
</comment>
<comment type="tissue specificity">
    <text evidence="2">Highly expressed in flower buds (PubMed:23663106). Expressed in branch attachment sites, vegetative buds and young fruits (PubMed:23663106).</text>
</comment>
<comment type="disruption phenotype">
    <text evidence="2">Pillar tree (erect shoot growth) phenotype.</text>
</comment>
<comment type="similarity">
    <text evidence="4">Belongs to the TAC family.</text>
</comment>
<comment type="sequence caution" evidence="4">
    <conflict type="erroneous gene model prediction">
        <sequence resource="EMBL-CDS" id="EMJ21729"/>
    </conflict>
</comment>
<protein>
    <recommendedName>
        <fullName evidence="3">Protein TILLER ANGLE CONTROL 1</fullName>
        <shortName evidence="3">PpeTAC1</shortName>
    </recommendedName>
</protein>
<reference key="1">
    <citation type="journal article" date="2013" name="Plant J.">
        <title>PpeTAC1 promotes the horizontal growth of branches in peach trees and is a member of a functionally conserved gene family found in diverse plants species.</title>
        <authorList>
            <person name="Dardick C."/>
            <person name="Callahan A."/>
            <person name="Horn R."/>
            <person name="Ruiz K.B."/>
            <person name="Zhebentyayeva T."/>
            <person name="Hollender C."/>
            <person name="Whitaker M."/>
            <person name="Abbott A."/>
            <person name="Scorza R."/>
        </authorList>
    </citation>
    <scope>NUCLEOTIDE SEQUENCE [GENOMIC DNA]</scope>
    <scope>FUNCTION</scope>
    <scope>TISSUE SPECIFICITY</scope>
    <scope>DISRUPTION PHENOTYPE</scope>
</reference>
<reference key="2">
    <citation type="journal article" date="2013" name="Nat. Genet.">
        <title>The high-quality draft genome of peach (Prunus persica) identifies unique patterns of genetic diversity, domestication and genome evolution.</title>
        <authorList>
            <consortium name="International Peach Genome Initiative"/>
            <person name="Verde I."/>
            <person name="Abbott A.G."/>
            <person name="Scalabrin S."/>
            <person name="Jung S."/>
            <person name="Shu S."/>
            <person name="Marroni F."/>
            <person name="Zhebentyayeva T."/>
            <person name="Dettori M.T."/>
            <person name="Grimwood J."/>
            <person name="Cattonaro F."/>
            <person name="Zuccolo A."/>
            <person name="Rossini L."/>
            <person name="Jenkins J."/>
            <person name="Vendramin E."/>
            <person name="Meisel L.A."/>
            <person name="Decroocq V."/>
            <person name="Sosinski B."/>
            <person name="Prochnik S."/>
            <person name="Mitros T."/>
            <person name="Policriti A."/>
            <person name="Cipriani G."/>
            <person name="Dondini L."/>
            <person name="Ficklin S."/>
            <person name="Goodstein D.M."/>
            <person name="Xuan P."/>
            <person name="Del Fabbro C.D."/>
            <person name="Aramini V."/>
            <person name="Copetti D."/>
            <person name="Gonzalez S."/>
            <person name="Horner D.S."/>
            <person name="Falchi R."/>
            <person name="Lucas S."/>
            <person name="Mica E."/>
            <person name="Maldonado J."/>
            <person name="Lazzari B."/>
            <person name="Bielenberg D."/>
            <person name="Pirona R."/>
            <person name="Miculan M."/>
            <person name="Barakat A."/>
            <person name="Testolin R."/>
            <person name="Stella A."/>
            <person name="Tartarini S."/>
            <person name="Tonutti P."/>
            <person name="Arus P."/>
            <person name="Orellana A."/>
            <person name="Wells C."/>
            <person name="Main D."/>
            <person name="Vizzotto G."/>
            <person name="Silva H."/>
            <person name="Salamini F."/>
            <person name="Schmutz J."/>
            <person name="Morgante M."/>
            <person name="Rokhsar D.S."/>
        </authorList>
    </citation>
    <scope>NUCLEOTIDE SEQUENCE [LARGE SCALE GENOMIC DNA]</scope>
    <source>
        <strain>cv. Nemared</strain>
    </source>
</reference>
<evidence type="ECO:0000256" key="1">
    <source>
        <dbReference type="SAM" id="MobiDB-lite"/>
    </source>
</evidence>
<evidence type="ECO:0000269" key="2">
    <source>
    </source>
</evidence>
<evidence type="ECO:0000303" key="3">
    <source>
    </source>
</evidence>
<evidence type="ECO:0000305" key="4"/>
<evidence type="ECO:0000312" key="5">
    <source>
        <dbReference type="EMBL" id="ONI23542.1"/>
    </source>
</evidence>
<organism>
    <name type="scientific">Prunus persica</name>
    <name type="common">Peach</name>
    <name type="synonym">Amygdalus persica</name>
    <dbReference type="NCBI Taxonomy" id="3760"/>
    <lineage>
        <taxon>Eukaryota</taxon>
        <taxon>Viridiplantae</taxon>
        <taxon>Streptophyta</taxon>
        <taxon>Embryophyta</taxon>
        <taxon>Tracheophyta</taxon>
        <taxon>Spermatophyta</taxon>
        <taxon>Magnoliopsida</taxon>
        <taxon>eudicotyledons</taxon>
        <taxon>Gunneridae</taxon>
        <taxon>Pentapetalae</taxon>
        <taxon>rosids</taxon>
        <taxon>fabids</taxon>
        <taxon>Rosales</taxon>
        <taxon>Rosaceae</taxon>
        <taxon>Amygdaloideae</taxon>
        <taxon>Amygdaleae</taxon>
        <taxon>Prunus</taxon>
    </lineage>
</organism>
<keyword id="KW-0341">Growth regulation</keyword>
<keyword id="KW-1185">Reference proteome</keyword>
<accession>U3MMQ4</accession>
<accession>M5X706</accession>
<sequence>MKIFNWVHKRLHQRVVKDGFAGNVKKSELETNDKDTQAFLKQVGLVNVDGLDGWRDGILTIGTFGFDPLKPSTHQNEYFVLESEEDDQESHGFSHSGNDDDDDDDEHYDHSVEDEELNPLMFTTFEHSFEDIGSNFDAIVQKPADVILTVDGVPLTPFEGSSEISTKPDQSANDQSKNKKGQRITLADLFQADVPDVGQLKLDSGKVQPEMEKKMNARTRSGLAFAKKLIPRVKDDSSPIKNMQRLMRRMLKRKIHPAELEVKIHKSDGQKQPSAVELISNVENDAYESVSLLPIQGAPCVH</sequence>
<feature type="chain" id="PRO_0000451027" description="Protein TILLER ANGLE CONTROL 1">
    <location>
        <begin position="1"/>
        <end position="302"/>
    </location>
</feature>
<feature type="region of interest" description="Disordered" evidence="1">
    <location>
        <begin position="82"/>
        <end position="115"/>
    </location>
</feature>
<feature type="region of interest" description="Disordered" evidence="1">
    <location>
        <begin position="159"/>
        <end position="180"/>
    </location>
</feature>
<feature type="short sequence motif" description="IGT motif" evidence="4">
    <location>
        <begin position="57"/>
        <end position="63"/>
    </location>
</feature>
<feature type="compositionally biased region" description="Acidic residues" evidence="1">
    <location>
        <begin position="99"/>
        <end position="115"/>
    </location>
</feature>
<feature type="compositionally biased region" description="Polar residues" evidence="1">
    <location>
        <begin position="162"/>
        <end position="175"/>
    </location>
</feature>
<gene>
    <name evidence="3" type="primary">TAC1</name>
    <name evidence="5" type="ORF">PRUPE_2G194000</name>
</gene>
<dbReference type="EMBL" id="KF218366">
    <property type="protein sequence ID" value="AGW17262.1"/>
    <property type="molecule type" value="Genomic_DNA"/>
</dbReference>
<dbReference type="EMBL" id="CM007652">
    <property type="protein sequence ID" value="ONI23542.1"/>
    <property type="molecule type" value="Genomic_DNA"/>
</dbReference>
<dbReference type="EMBL" id="KB638974">
    <property type="protein sequence ID" value="EMJ21729.1"/>
    <property type="status" value="ALT_SEQ"/>
    <property type="molecule type" value="Genomic_DNA"/>
</dbReference>
<dbReference type="STRING" id="3760.U3MMQ4"/>
<dbReference type="EnsemblPlants" id="ONI23542">
    <property type="protein sequence ID" value="ONI23542"/>
    <property type="gene ID" value="PRUPE_2G194000"/>
</dbReference>
<dbReference type="Gramene" id="ONI23542">
    <property type="protein sequence ID" value="ONI23542"/>
    <property type="gene ID" value="PRUPE_2G194000"/>
</dbReference>
<dbReference type="HOGENOM" id="CLU_070705_0_0_1"/>
<dbReference type="OrthoDB" id="1922866at2759"/>
<dbReference type="PhylomeDB" id="U3MMQ4"/>
<dbReference type="Proteomes" id="UP000006882">
    <property type="component" value="Chromosome g2"/>
</dbReference>
<dbReference type="GO" id="GO:0001763">
    <property type="term" value="P:morphogenesis of a branching structure"/>
    <property type="evidence" value="ECO:0000315"/>
    <property type="project" value="UniProtKB"/>
</dbReference>
<dbReference type="GO" id="GO:0060771">
    <property type="term" value="P:phyllotactic patterning"/>
    <property type="evidence" value="ECO:0000315"/>
    <property type="project" value="UniProtKB"/>
</dbReference>
<dbReference type="InterPro" id="IPR044989">
    <property type="entry name" value="TAC1"/>
</dbReference>
<dbReference type="PANTHER" id="PTHR38366">
    <property type="entry name" value="NAD-DEPENDENT PROTEIN DEACETYLASE HST1-LIKE PROTEIN"/>
    <property type="match status" value="1"/>
</dbReference>
<dbReference type="PANTHER" id="PTHR38366:SF1">
    <property type="entry name" value="PROTEIN TILLER ANGLE CONTROL 1"/>
    <property type="match status" value="1"/>
</dbReference>
<proteinExistence type="evidence at transcript level"/>
<name>TAC1_PRUPE</name>